<evidence type="ECO:0000255" key="1">
    <source>
        <dbReference type="HAMAP-Rule" id="MF_00362"/>
    </source>
</evidence>
<evidence type="ECO:0000305" key="2"/>
<keyword id="KW-0687">Ribonucleoprotein</keyword>
<keyword id="KW-0689">Ribosomal protein</keyword>
<keyword id="KW-0694">RNA-binding</keyword>
<keyword id="KW-0699">rRNA-binding</keyword>
<feature type="chain" id="PRO_1000121029" description="Large ribosomal subunit protein uL10">
    <location>
        <begin position="1"/>
        <end position="180"/>
    </location>
</feature>
<accession>B2S2I6</accession>
<comment type="function">
    <text evidence="1">Forms part of the ribosomal stalk, playing a central role in the interaction of the ribosome with GTP-bound translation factors.</text>
</comment>
<comment type="subunit">
    <text evidence="1">Part of the ribosomal stalk of the 50S ribosomal subunit. The N-terminus interacts with L11 and the large rRNA to form the base of the stalk. The C-terminus forms an elongated spine to which L12 dimers bind in a sequential fashion forming a multimeric L10(L12)X complex.</text>
</comment>
<comment type="similarity">
    <text evidence="1">Belongs to the universal ribosomal protein uL10 family.</text>
</comment>
<protein>
    <recommendedName>
        <fullName evidence="1">Large ribosomal subunit protein uL10</fullName>
    </recommendedName>
    <alternativeName>
        <fullName evidence="2">50S ribosomal protein L10</fullName>
    </alternativeName>
</protein>
<name>RL10_TREPS</name>
<dbReference type="EMBL" id="CP000805">
    <property type="protein sequence ID" value="ACD70665.1"/>
    <property type="molecule type" value="Genomic_DNA"/>
</dbReference>
<dbReference type="RefSeq" id="WP_010881687.1">
    <property type="nucleotide sequence ID" value="NC_021508.1"/>
</dbReference>
<dbReference type="SMR" id="B2S2I6"/>
<dbReference type="GeneID" id="93876031"/>
<dbReference type="KEGG" id="tpp:TPASS_0239"/>
<dbReference type="PATRIC" id="fig|455434.6.peg.243"/>
<dbReference type="Proteomes" id="UP000001202">
    <property type="component" value="Chromosome"/>
</dbReference>
<dbReference type="GO" id="GO:0015934">
    <property type="term" value="C:large ribosomal subunit"/>
    <property type="evidence" value="ECO:0007669"/>
    <property type="project" value="InterPro"/>
</dbReference>
<dbReference type="GO" id="GO:0070180">
    <property type="term" value="F:large ribosomal subunit rRNA binding"/>
    <property type="evidence" value="ECO:0007669"/>
    <property type="project" value="UniProtKB-UniRule"/>
</dbReference>
<dbReference type="GO" id="GO:0003735">
    <property type="term" value="F:structural constituent of ribosome"/>
    <property type="evidence" value="ECO:0007669"/>
    <property type="project" value="InterPro"/>
</dbReference>
<dbReference type="GO" id="GO:0006412">
    <property type="term" value="P:translation"/>
    <property type="evidence" value="ECO:0007669"/>
    <property type="project" value="UniProtKB-UniRule"/>
</dbReference>
<dbReference type="CDD" id="cd05797">
    <property type="entry name" value="Ribosomal_L10"/>
    <property type="match status" value="1"/>
</dbReference>
<dbReference type="Gene3D" id="3.30.70.1730">
    <property type="match status" value="1"/>
</dbReference>
<dbReference type="HAMAP" id="MF_00362">
    <property type="entry name" value="Ribosomal_uL10"/>
    <property type="match status" value="1"/>
</dbReference>
<dbReference type="InterPro" id="IPR001790">
    <property type="entry name" value="Ribosomal_uL10"/>
</dbReference>
<dbReference type="InterPro" id="IPR043141">
    <property type="entry name" value="Ribosomal_uL10-like_sf"/>
</dbReference>
<dbReference type="InterPro" id="IPR022973">
    <property type="entry name" value="Ribosomal_uL10_bac"/>
</dbReference>
<dbReference type="InterPro" id="IPR047865">
    <property type="entry name" value="Ribosomal_uL10_bac_type"/>
</dbReference>
<dbReference type="InterPro" id="IPR002363">
    <property type="entry name" value="Ribosomal_uL10_CS_bac"/>
</dbReference>
<dbReference type="NCBIfam" id="NF000955">
    <property type="entry name" value="PRK00099.1-1"/>
    <property type="match status" value="1"/>
</dbReference>
<dbReference type="PANTHER" id="PTHR11560">
    <property type="entry name" value="39S RIBOSOMAL PROTEIN L10, MITOCHONDRIAL"/>
    <property type="match status" value="1"/>
</dbReference>
<dbReference type="Pfam" id="PF00466">
    <property type="entry name" value="Ribosomal_L10"/>
    <property type="match status" value="1"/>
</dbReference>
<dbReference type="SUPFAM" id="SSF160369">
    <property type="entry name" value="Ribosomal protein L10-like"/>
    <property type="match status" value="1"/>
</dbReference>
<dbReference type="PROSITE" id="PS01109">
    <property type="entry name" value="RIBOSOMAL_L10"/>
    <property type="match status" value="1"/>
</dbReference>
<proteinExistence type="inferred from homology"/>
<gene>
    <name evidence="1" type="primary">rplJ</name>
    <name type="ordered locus">TPASS_0239</name>
</gene>
<sequence>MAVRARRLQPAKVAAVESLTRDLGEASSYIFTEYRGLTVEQLTALRRALREFSCVYRVVRNNFANIAFTSLNMTVGEYLVGPTAIALVDTEHANGVARVLFDFAKEVPALVVKGAILDGEVFDASKVEAYSKLPGKKELVSMFLSALNATTVKFVRVLQAVMDKRDEGVEVSVVSGGDSS</sequence>
<reference key="1">
    <citation type="journal article" date="2008" name="BMC Microbiol.">
        <title>Complete genome sequence of Treponema pallidum ssp. pallidum strain SS14 determined with oligonucleotide arrays.</title>
        <authorList>
            <person name="Matejkova P."/>
            <person name="Strouhal M."/>
            <person name="Smajs D."/>
            <person name="Norris S.J."/>
            <person name="Palzkill T."/>
            <person name="Petrosino J.F."/>
            <person name="Sodergren E."/>
            <person name="Norton J.E."/>
            <person name="Singh J."/>
            <person name="Richmond T.A."/>
            <person name="Molla M.N."/>
            <person name="Albert T.J."/>
            <person name="Weinstock G.M."/>
        </authorList>
    </citation>
    <scope>NUCLEOTIDE SEQUENCE [LARGE SCALE GENOMIC DNA]</scope>
    <source>
        <strain>SS14</strain>
    </source>
</reference>
<organism>
    <name type="scientific">Treponema pallidum subsp. pallidum (strain SS14)</name>
    <dbReference type="NCBI Taxonomy" id="455434"/>
    <lineage>
        <taxon>Bacteria</taxon>
        <taxon>Pseudomonadati</taxon>
        <taxon>Spirochaetota</taxon>
        <taxon>Spirochaetia</taxon>
        <taxon>Spirochaetales</taxon>
        <taxon>Treponemataceae</taxon>
        <taxon>Treponema</taxon>
    </lineage>
</organism>